<gene>
    <name type="ORF">DDB_G0284915</name>
</gene>
<name>MTNB_DICDI</name>
<protein>
    <recommendedName>
        <fullName evidence="1">Probable methylthioribulose-1-phosphate dehydratase</fullName>
        <shortName evidence="1">MTRu-1-P dehydratase</shortName>
        <ecNumber evidence="1">4.2.1.109</ecNumber>
    </recommendedName>
</protein>
<dbReference type="EC" id="4.2.1.109" evidence="1"/>
<dbReference type="EMBL" id="AAFI02000073">
    <property type="protein sequence ID" value="EAL64921.1"/>
    <property type="molecule type" value="Genomic_DNA"/>
</dbReference>
<dbReference type="RefSeq" id="XP_639930.1">
    <property type="nucleotide sequence ID" value="XM_634838.1"/>
</dbReference>
<dbReference type="SMR" id="Q54NY7"/>
<dbReference type="FunCoup" id="Q54NY7">
    <property type="interactions" value="135"/>
</dbReference>
<dbReference type="STRING" id="44689.Q54NY7"/>
<dbReference type="PaxDb" id="44689-DDB0233078"/>
<dbReference type="EnsemblProtists" id="EAL64921">
    <property type="protein sequence ID" value="EAL64921"/>
    <property type="gene ID" value="DDB_G0284915"/>
</dbReference>
<dbReference type="GeneID" id="8624842"/>
<dbReference type="KEGG" id="ddi:DDB_G0284915"/>
<dbReference type="dictyBase" id="DDB_G0284915"/>
<dbReference type="VEuPathDB" id="AmoebaDB:DDB_G0284915"/>
<dbReference type="eggNOG" id="KOG2631">
    <property type="taxonomic scope" value="Eukaryota"/>
</dbReference>
<dbReference type="HOGENOM" id="CLU_006033_4_0_1"/>
<dbReference type="InParanoid" id="Q54NY7"/>
<dbReference type="OMA" id="WFPGTSG"/>
<dbReference type="PhylomeDB" id="Q54NY7"/>
<dbReference type="UniPathway" id="UPA00904">
    <property type="reaction ID" value="UER00875"/>
</dbReference>
<dbReference type="PRO" id="PR:Q54NY7"/>
<dbReference type="Proteomes" id="UP000002195">
    <property type="component" value="Chromosome 4"/>
</dbReference>
<dbReference type="GO" id="GO:0005737">
    <property type="term" value="C:cytoplasm"/>
    <property type="evidence" value="ECO:0000318"/>
    <property type="project" value="GO_Central"/>
</dbReference>
<dbReference type="GO" id="GO:0046570">
    <property type="term" value="F:methylthioribulose 1-phosphate dehydratase activity"/>
    <property type="evidence" value="ECO:0000250"/>
    <property type="project" value="UniProtKB"/>
</dbReference>
<dbReference type="GO" id="GO:0008270">
    <property type="term" value="F:zinc ion binding"/>
    <property type="evidence" value="ECO:0000250"/>
    <property type="project" value="UniProtKB"/>
</dbReference>
<dbReference type="GO" id="GO:0019509">
    <property type="term" value="P:L-methionine salvage from methylthioadenosine"/>
    <property type="evidence" value="ECO:0000318"/>
    <property type="project" value="GO_Central"/>
</dbReference>
<dbReference type="FunFam" id="3.40.225.10:FF:000003">
    <property type="entry name" value="Methylthioribulose-1-phosphate dehydratase"/>
    <property type="match status" value="1"/>
</dbReference>
<dbReference type="Gene3D" id="3.40.225.10">
    <property type="entry name" value="Class II aldolase/adducin N-terminal domain"/>
    <property type="match status" value="1"/>
</dbReference>
<dbReference type="HAMAP" id="MF_03116">
    <property type="entry name" value="Salvage_MtnB_euk"/>
    <property type="match status" value="1"/>
</dbReference>
<dbReference type="InterPro" id="IPR001303">
    <property type="entry name" value="Aldolase_II/adducin_N"/>
</dbReference>
<dbReference type="InterPro" id="IPR036409">
    <property type="entry name" value="Aldolase_II/adducin_N_sf"/>
</dbReference>
<dbReference type="InterPro" id="IPR017714">
    <property type="entry name" value="MethylthioRu-1-P_deHdtase_MtnB"/>
</dbReference>
<dbReference type="InterPro" id="IPR027514">
    <property type="entry name" value="Salvage_MtnB_euk"/>
</dbReference>
<dbReference type="NCBIfam" id="TIGR03328">
    <property type="entry name" value="salvage_mtnB"/>
    <property type="match status" value="1"/>
</dbReference>
<dbReference type="PANTHER" id="PTHR10640">
    <property type="entry name" value="METHYLTHIORIBULOSE-1-PHOSPHATE DEHYDRATASE"/>
    <property type="match status" value="1"/>
</dbReference>
<dbReference type="PANTHER" id="PTHR10640:SF7">
    <property type="entry name" value="METHYLTHIORIBULOSE-1-PHOSPHATE DEHYDRATASE"/>
    <property type="match status" value="1"/>
</dbReference>
<dbReference type="Pfam" id="PF00596">
    <property type="entry name" value="Aldolase_II"/>
    <property type="match status" value="1"/>
</dbReference>
<dbReference type="SMART" id="SM01007">
    <property type="entry name" value="Aldolase_II"/>
    <property type="match status" value="1"/>
</dbReference>
<dbReference type="SUPFAM" id="SSF53639">
    <property type="entry name" value="AraD/HMP-PK domain-like"/>
    <property type="match status" value="1"/>
</dbReference>
<sequence>MSNFDSEHPRVLIPELCKLFYGNGWVTGTGGGISIKRDKEIYIAASGVQKERILGEDIFVMDENENEISTPPTEKKLKASQCTPLFFNAYKYRDAGAVIHTHSQHAVMVTLLYQTEFIITHQEMIKGILSGHGENAKYLQYFDRLVIPIIENTPHERDLKERMHKAMEKYPNANAVLVRRHGVYVWGPDWVKAKTMCECFDYLFEIAIKMKQMGLDPTEVPHANEECCYDC</sequence>
<accession>Q54NY7</accession>
<proteinExistence type="inferred from homology"/>
<evidence type="ECO:0000255" key="1">
    <source>
        <dbReference type="HAMAP-Rule" id="MF_03116"/>
    </source>
</evidence>
<keyword id="KW-0028">Amino-acid biosynthesis</keyword>
<keyword id="KW-0963">Cytoplasm</keyword>
<keyword id="KW-0456">Lyase</keyword>
<keyword id="KW-0479">Metal-binding</keyword>
<keyword id="KW-0486">Methionine biosynthesis</keyword>
<keyword id="KW-1185">Reference proteome</keyword>
<keyword id="KW-0862">Zinc</keyword>
<organism>
    <name type="scientific">Dictyostelium discoideum</name>
    <name type="common">Social amoeba</name>
    <dbReference type="NCBI Taxonomy" id="44689"/>
    <lineage>
        <taxon>Eukaryota</taxon>
        <taxon>Amoebozoa</taxon>
        <taxon>Evosea</taxon>
        <taxon>Eumycetozoa</taxon>
        <taxon>Dictyostelia</taxon>
        <taxon>Dictyosteliales</taxon>
        <taxon>Dictyosteliaceae</taxon>
        <taxon>Dictyostelium</taxon>
    </lineage>
</organism>
<feature type="chain" id="PRO_0000393795" description="Probable methylthioribulose-1-phosphate dehydratase">
    <location>
        <begin position="1"/>
        <end position="231"/>
    </location>
</feature>
<feature type="active site" description="Proton donor/acceptor" evidence="1">
    <location>
        <position position="123"/>
    </location>
</feature>
<feature type="binding site" evidence="1">
    <location>
        <position position="82"/>
    </location>
    <ligand>
        <name>substrate</name>
    </ligand>
</feature>
<feature type="binding site" evidence="1">
    <location>
        <position position="100"/>
    </location>
    <ligand>
        <name>Zn(2+)</name>
        <dbReference type="ChEBI" id="CHEBI:29105"/>
    </ligand>
</feature>
<feature type="binding site" evidence="1">
    <location>
        <position position="102"/>
    </location>
    <ligand>
        <name>Zn(2+)</name>
        <dbReference type="ChEBI" id="CHEBI:29105"/>
    </ligand>
</feature>
<feature type="binding site" evidence="1">
    <location>
        <position position="181"/>
    </location>
    <ligand>
        <name>Zn(2+)</name>
        <dbReference type="ChEBI" id="CHEBI:29105"/>
    </ligand>
</feature>
<comment type="function">
    <text evidence="1">Catalyzes the dehydration of methylthioribulose-1-phosphate (MTRu-1-P) into 2,3-diketo-5-methylthiopentyl-1-phosphate (DK-MTP-1-P).</text>
</comment>
<comment type="catalytic activity">
    <reaction evidence="1">
        <text>5-(methylsulfanyl)-D-ribulose 1-phosphate = 5-methylsulfanyl-2,3-dioxopentyl phosphate + H2O</text>
        <dbReference type="Rhea" id="RHEA:15549"/>
        <dbReference type="ChEBI" id="CHEBI:15377"/>
        <dbReference type="ChEBI" id="CHEBI:58548"/>
        <dbReference type="ChEBI" id="CHEBI:58828"/>
        <dbReference type="EC" id="4.2.1.109"/>
    </reaction>
</comment>
<comment type="cofactor">
    <cofactor evidence="1">
        <name>Zn(2+)</name>
        <dbReference type="ChEBI" id="CHEBI:29105"/>
    </cofactor>
    <text evidence="1">Binds 1 zinc ion per subunit.</text>
</comment>
<comment type="pathway">
    <text evidence="1">Amino-acid biosynthesis; L-methionine biosynthesis via salvage pathway; L-methionine from S-methyl-5-thio-alpha-D-ribose 1-phosphate: step 2/6.</text>
</comment>
<comment type="subcellular location">
    <subcellularLocation>
        <location evidence="1">Cytoplasm</location>
    </subcellularLocation>
</comment>
<comment type="similarity">
    <text evidence="1">Belongs to the aldolase class II family. MtnB subfamily.</text>
</comment>
<reference key="1">
    <citation type="journal article" date="2005" name="Nature">
        <title>The genome of the social amoeba Dictyostelium discoideum.</title>
        <authorList>
            <person name="Eichinger L."/>
            <person name="Pachebat J.A."/>
            <person name="Gloeckner G."/>
            <person name="Rajandream M.A."/>
            <person name="Sucgang R."/>
            <person name="Berriman M."/>
            <person name="Song J."/>
            <person name="Olsen R."/>
            <person name="Szafranski K."/>
            <person name="Xu Q."/>
            <person name="Tunggal B."/>
            <person name="Kummerfeld S."/>
            <person name="Madera M."/>
            <person name="Konfortov B.A."/>
            <person name="Rivero F."/>
            <person name="Bankier A.T."/>
            <person name="Lehmann R."/>
            <person name="Hamlin N."/>
            <person name="Davies R."/>
            <person name="Gaudet P."/>
            <person name="Fey P."/>
            <person name="Pilcher K."/>
            <person name="Chen G."/>
            <person name="Saunders D."/>
            <person name="Sodergren E.J."/>
            <person name="Davis P."/>
            <person name="Kerhornou A."/>
            <person name="Nie X."/>
            <person name="Hall N."/>
            <person name="Anjard C."/>
            <person name="Hemphill L."/>
            <person name="Bason N."/>
            <person name="Farbrother P."/>
            <person name="Desany B."/>
            <person name="Just E."/>
            <person name="Morio T."/>
            <person name="Rost R."/>
            <person name="Churcher C.M."/>
            <person name="Cooper J."/>
            <person name="Haydock S."/>
            <person name="van Driessche N."/>
            <person name="Cronin A."/>
            <person name="Goodhead I."/>
            <person name="Muzny D.M."/>
            <person name="Mourier T."/>
            <person name="Pain A."/>
            <person name="Lu M."/>
            <person name="Harper D."/>
            <person name="Lindsay R."/>
            <person name="Hauser H."/>
            <person name="James K.D."/>
            <person name="Quiles M."/>
            <person name="Madan Babu M."/>
            <person name="Saito T."/>
            <person name="Buchrieser C."/>
            <person name="Wardroper A."/>
            <person name="Felder M."/>
            <person name="Thangavelu M."/>
            <person name="Johnson D."/>
            <person name="Knights A."/>
            <person name="Loulseged H."/>
            <person name="Mungall K.L."/>
            <person name="Oliver K."/>
            <person name="Price C."/>
            <person name="Quail M.A."/>
            <person name="Urushihara H."/>
            <person name="Hernandez J."/>
            <person name="Rabbinowitsch E."/>
            <person name="Steffen D."/>
            <person name="Sanders M."/>
            <person name="Ma J."/>
            <person name="Kohara Y."/>
            <person name="Sharp S."/>
            <person name="Simmonds M.N."/>
            <person name="Spiegler S."/>
            <person name="Tivey A."/>
            <person name="Sugano S."/>
            <person name="White B."/>
            <person name="Walker D."/>
            <person name="Woodward J.R."/>
            <person name="Winckler T."/>
            <person name="Tanaka Y."/>
            <person name="Shaulsky G."/>
            <person name="Schleicher M."/>
            <person name="Weinstock G.M."/>
            <person name="Rosenthal A."/>
            <person name="Cox E.C."/>
            <person name="Chisholm R.L."/>
            <person name="Gibbs R.A."/>
            <person name="Loomis W.F."/>
            <person name="Platzer M."/>
            <person name="Kay R.R."/>
            <person name="Williams J.G."/>
            <person name="Dear P.H."/>
            <person name="Noegel A.A."/>
            <person name="Barrell B.G."/>
            <person name="Kuspa A."/>
        </authorList>
    </citation>
    <scope>NUCLEOTIDE SEQUENCE [LARGE SCALE GENOMIC DNA]</scope>
    <source>
        <strain>AX4</strain>
    </source>
</reference>